<organismHost>
    <name type="scientific">Phaseolus vulgaris</name>
    <name type="common">Kidney bean</name>
    <name type="synonym">French bean</name>
    <dbReference type="NCBI Taxonomy" id="3885"/>
</organismHost>
<dbReference type="EMBL" id="Y11023">
    <property type="protein sequence ID" value="CAA71905.1"/>
    <property type="molecule type" value="Genomic_DNA"/>
</dbReference>
<dbReference type="EMBL" id="DQ458791">
    <property type="protein sequence ID" value="ABE67100.1"/>
    <property type="molecule type" value="Genomic_DNA"/>
</dbReference>
<dbReference type="SMR" id="O39519"/>
<dbReference type="KEGG" id="vg:935293"/>
<dbReference type="OrthoDB" id="27971at10239"/>
<dbReference type="Proteomes" id="UP000007453">
    <property type="component" value="Genome"/>
</dbReference>
<dbReference type="GO" id="GO:0033644">
    <property type="term" value="C:host cell membrane"/>
    <property type="evidence" value="ECO:0007669"/>
    <property type="project" value="UniProtKB-SubCell"/>
</dbReference>
<dbReference type="GO" id="GO:0016020">
    <property type="term" value="C:membrane"/>
    <property type="evidence" value="ECO:0007669"/>
    <property type="project" value="UniProtKB-KW"/>
</dbReference>
<dbReference type="GO" id="GO:0046740">
    <property type="term" value="P:transport of virus in host, cell to cell"/>
    <property type="evidence" value="ECO:0007669"/>
    <property type="project" value="UniProtKB-KW"/>
</dbReference>
<dbReference type="InterPro" id="IPR002621">
    <property type="entry name" value="Gemini_mov"/>
</dbReference>
<dbReference type="Pfam" id="PF01708">
    <property type="entry name" value="Gemini_mov"/>
    <property type="match status" value="1"/>
</dbReference>
<name>MP_BEYDV</name>
<sequence>MERILYQVFPSDTNYSYDPPAVTAPSQGSSQTDFGKVVIALVVILVSVGVFYLAYTLFLKDCILLFKAKKQRTTTEIGFGQTPARNQDHPGP</sequence>
<feature type="chain" id="PRO_0000318769" description="Movement protein">
    <location>
        <begin position="1"/>
        <end position="92"/>
    </location>
</feature>
<feature type="transmembrane region" description="Helical" evidence="2">
    <location>
        <begin position="38"/>
        <end position="58"/>
    </location>
</feature>
<feature type="sequence variant" description="In strain: Mild.">
    <original>S</original>
    <variation>L</variation>
    <location>
        <position position="11"/>
    </location>
</feature>
<feature type="sequence variant" description="In strain: Mild.">
    <original>I</original>
    <variation>V</variation>
    <location>
        <position position="39"/>
    </location>
</feature>
<feature type="sequence variant" description="In strain: Mild.">
    <original>T</original>
    <variation>S</variation>
    <location>
        <position position="56"/>
    </location>
</feature>
<organism>
    <name type="scientific">Bean yellow dwarf virus</name>
    <name type="common">BeYDV</name>
    <dbReference type="NCBI Taxonomy" id="57119"/>
    <lineage>
        <taxon>Viruses</taxon>
        <taxon>Monodnaviria</taxon>
        <taxon>Shotokuvirae</taxon>
        <taxon>Cressdnaviricota</taxon>
        <taxon>Repensiviricetes</taxon>
        <taxon>Geplafuvirales</taxon>
        <taxon>Geminiviridae</taxon>
        <taxon>Mastrevirus</taxon>
    </lineage>
</organism>
<gene>
    <name type="ORF">V2</name>
</gene>
<protein>
    <recommendedName>
        <fullName>Movement protein</fullName>
        <shortName>MP</shortName>
    </recommendedName>
</protein>
<evidence type="ECO:0000250" key="1"/>
<evidence type="ECO:0000255" key="2"/>
<evidence type="ECO:0000305" key="3"/>
<proteinExistence type="inferred from homology"/>
<comment type="function">
    <text>Involved in the viral transport within, and between cells.</text>
</comment>
<comment type="subunit">
    <text evidence="1">Interacts with the capsid protein (CP). Part of a MP-CP-viral DNA complex (By similarity).</text>
</comment>
<comment type="subcellular location">
    <subcellularLocation>
        <location evidence="3">Host membrane</location>
        <topology evidence="3">Single-pass membrane protein</topology>
    </subcellularLocation>
</comment>
<comment type="similarity">
    <text evidence="3">Belongs to the mastrevirus movement protein family.</text>
</comment>
<reference key="1">
    <citation type="journal article" date="1997" name="J. Gen. Virol.">
        <title>Molecular characterization of a subgroup I geminivirus from a legume.</title>
        <authorList>
            <person name="Liu L."/>
            <person name="van Tonder T."/>
            <person name="Pietersen G."/>
            <person name="Davies J.W."/>
            <person name="Stanley J."/>
        </authorList>
    </citation>
    <scope>NUCLEOTIDE SEQUENCE [GENOMIC DNA]</scope>
</reference>
<reference key="2">
    <citation type="journal article" date="2007" name="Arch. Virol.">
        <title>The complete nucleotide sequence of a mild strain of Bean yellow dwarf virus.</title>
        <authorList>
            <person name="Halley-Stott R.P."/>
            <person name="Tanzer F."/>
            <person name="Martin D.P."/>
            <person name="Rybicki E.P."/>
        </authorList>
    </citation>
    <scope>NUCLEOTIDE SEQUENCE [GENOMIC DNA]</scope>
    <source>
        <strain>Mild</strain>
    </source>
</reference>
<keyword id="KW-1043">Host membrane</keyword>
<keyword id="KW-0472">Membrane</keyword>
<keyword id="KW-1185">Reference proteome</keyword>
<keyword id="KW-0812">Transmembrane</keyword>
<keyword id="KW-1133">Transmembrane helix</keyword>
<keyword id="KW-0813">Transport</keyword>
<keyword id="KW-0916">Viral movement protein</keyword>
<accession>O39519</accession>
<accession>A4K7Q1</accession>